<dbReference type="EC" id="6.3.5.2" evidence="1"/>
<dbReference type="EMBL" id="AP009247">
    <property type="protein sequence ID" value="BAF61926.1"/>
    <property type="molecule type" value="Genomic_DNA"/>
</dbReference>
<dbReference type="SMR" id="A5CVV4"/>
<dbReference type="STRING" id="412965.COSY_0820"/>
<dbReference type="KEGG" id="vok:COSY_0820"/>
<dbReference type="eggNOG" id="COG0518">
    <property type="taxonomic scope" value="Bacteria"/>
</dbReference>
<dbReference type="eggNOG" id="COG0519">
    <property type="taxonomic scope" value="Bacteria"/>
</dbReference>
<dbReference type="HOGENOM" id="CLU_014340_0_5_6"/>
<dbReference type="UniPathway" id="UPA00189">
    <property type="reaction ID" value="UER00296"/>
</dbReference>
<dbReference type="Proteomes" id="UP000000247">
    <property type="component" value="Chromosome"/>
</dbReference>
<dbReference type="GO" id="GO:0005829">
    <property type="term" value="C:cytosol"/>
    <property type="evidence" value="ECO:0007669"/>
    <property type="project" value="TreeGrafter"/>
</dbReference>
<dbReference type="GO" id="GO:0005524">
    <property type="term" value="F:ATP binding"/>
    <property type="evidence" value="ECO:0007669"/>
    <property type="project" value="UniProtKB-UniRule"/>
</dbReference>
<dbReference type="GO" id="GO:0003921">
    <property type="term" value="F:GMP synthase activity"/>
    <property type="evidence" value="ECO:0007669"/>
    <property type="project" value="InterPro"/>
</dbReference>
<dbReference type="CDD" id="cd01742">
    <property type="entry name" value="GATase1_GMP_Synthase"/>
    <property type="match status" value="1"/>
</dbReference>
<dbReference type="CDD" id="cd01997">
    <property type="entry name" value="GMP_synthase_C"/>
    <property type="match status" value="1"/>
</dbReference>
<dbReference type="FunFam" id="3.30.300.10:FF:000002">
    <property type="entry name" value="GMP synthase [glutamine-hydrolyzing]"/>
    <property type="match status" value="1"/>
</dbReference>
<dbReference type="FunFam" id="3.40.50.620:FF:000001">
    <property type="entry name" value="GMP synthase [glutamine-hydrolyzing]"/>
    <property type="match status" value="1"/>
</dbReference>
<dbReference type="FunFam" id="3.40.50.880:FF:000001">
    <property type="entry name" value="GMP synthase [glutamine-hydrolyzing]"/>
    <property type="match status" value="1"/>
</dbReference>
<dbReference type="Gene3D" id="3.30.300.10">
    <property type="match status" value="1"/>
</dbReference>
<dbReference type="Gene3D" id="3.40.50.880">
    <property type="match status" value="1"/>
</dbReference>
<dbReference type="Gene3D" id="3.40.50.620">
    <property type="entry name" value="HUPs"/>
    <property type="match status" value="1"/>
</dbReference>
<dbReference type="HAMAP" id="MF_00344">
    <property type="entry name" value="GMP_synthase"/>
    <property type="match status" value="1"/>
</dbReference>
<dbReference type="InterPro" id="IPR029062">
    <property type="entry name" value="Class_I_gatase-like"/>
</dbReference>
<dbReference type="InterPro" id="IPR017926">
    <property type="entry name" value="GATASE"/>
</dbReference>
<dbReference type="InterPro" id="IPR001674">
    <property type="entry name" value="GMP_synth_C"/>
</dbReference>
<dbReference type="InterPro" id="IPR004739">
    <property type="entry name" value="GMP_synth_GATase"/>
</dbReference>
<dbReference type="InterPro" id="IPR022955">
    <property type="entry name" value="GMP_synthase"/>
</dbReference>
<dbReference type="InterPro" id="IPR025777">
    <property type="entry name" value="GMPS_ATP_PPase_dom"/>
</dbReference>
<dbReference type="InterPro" id="IPR022310">
    <property type="entry name" value="NAD/GMP_synthase"/>
</dbReference>
<dbReference type="InterPro" id="IPR014729">
    <property type="entry name" value="Rossmann-like_a/b/a_fold"/>
</dbReference>
<dbReference type="NCBIfam" id="TIGR00884">
    <property type="entry name" value="guaA_Cterm"/>
    <property type="match status" value="1"/>
</dbReference>
<dbReference type="NCBIfam" id="TIGR00888">
    <property type="entry name" value="guaA_Nterm"/>
    <property type="match status" value="1"/>
</dbReference>
<dbReference type="NCBIfam" id="NF000848">
    <property type="entry name" value="PRK00074.1"/>
    <property type="match status" value="1"/>
</dbReference>
<dbReference type="PANTHER" id="PTHR11922:SF2">
    <property type="entry name" value="GMP SYNTHASE [GLUTAMINE-HYDROLYZING]"/>
    <property type="match status" value="1"/>
</dbReference>
<dbReference type="PANTHER" id="PTHR11922">
    <property type="entry name" value="GMP SYNTHASE-RELATED"/>
    <property type="match status" value="1"/>
</dbReference>
<dbReference type="Pfam" id="PF00117">
    <property type="entry name" value="GATase"/>
    <property type="match status" value="1"/>
</dbReference>
<dbReference type="Pfam" id="PF00958">
    <property type="entry name" value="GMP_synt_C"/>
    <property type="match status" value="1"/>
</dbReference>
<dbReference type="Pfam" id="PF02540">
    <property type="entry name" value="NAD_synthase"/>
    <property type="match status" value="1"/>
</dbReference>
<dbReference type="PRINTS" id="PR00097">
    <property type="entry name" value="ANTSNTHASEII"/>
</dbReference>
<dbReference type="PRINTS" id="PR00099">
    <property type="entry name" value="CPSGATASE"/>
</dbReference>
<dbReference type="PRINTS" id="PR00096">
    <property type="entry name" value="GATASE"/>
</dbReference>
<dbReference type="SUPFAM" id="SSF52402">
    <property type="entry name" value="Adenine nucleotide alpha hydrolases-like"/>
    <property type="match status" value="1"/>
</dbReference>
<dbReference type="SUPFAM" id="SSF52317">
    <property type="entry name" value="Class I glutamine amidotransferase-like"/>
    <property type="match status" value="1"/>
</dbReference>
<dbReference type="SUPFAM" id="SSF54810">
    <property type="entry name" value="GMP synthetase C-terminal dimerisation domain"/>
    <property type="match status" value="1"/>
</dbReference>
<dbReference type="PROSITE" id="PS51273">
    <property type="entry name" value="GATASE_TYPE_1"/>
    <property type="match status" value="1"/>
</dbReference>
<dbReference type="PROSITE" id="PS51553">
    <property type="entry name" value="GMPS_ATP_PPASE"/>
    <property type="match status" value="1"/>
</dbReference>
<evidence type="ECO:0000255" key="1">
    <source>
        <dbReference type="HAMAP-Rule" id="MF_00344"/>
    </source>
</evidence>
<accession>A5CVV4</accession>
<keyword id="KW-0067">ATP-binding</keyword>
<keyword id="KW-0315">Glutamine amidotransferase</keyword>
<keyword id="KW-0332">GMP biosynthesis</keyword>
<keyword id="KW-0436">Ligase</keyword>
<keyword id="KW-0547">Nucleotide-binding</keyword>
<keyword id="KW-0658">Purine biosynthesis</keyword>
<keyword id="KW-1185">Reference proteome</keyword>
<feature type="chain" id="PRO_1000205313" description="GMP synthase [glutamine-hydrolyzing]">
    <location>
        <begin position="1"/>
        <end position="521"/>
    </location>
</feature>
<feature type="domain" description="Glutamine amidotransferase type-1" evidence="1">
    <location>
        <begin position="9"/>
        <end position="203"/>
    </location>
</feature>
<feature type="domain" description="GMPS ATP-PPase" evidence="1">
    <location>
        <begin position="204"/>
        <end position="396"/>
    </location>
</feature>
<feature type="active site" description="Nucleophile" evidence="1">
    <location>
        <position position="86"/>
    </location>
</feature>
<feature type="active site" evidence="1">
    <location>
        <position position="177"/>
    </location>
</feature>
<feature type="active site" evidence="1">
    <location>
        <position position="179"/>
    </location>
</feature>
<feature type="binding site" evidence="1">
    <location>
        <begin position="231"/>
        <end position="237"/>
    </location>
    <ligand>
        <name>ATP</name>
        <dbReference type="ChEBI" id="CHEBI:30616"/>
    </ligand>
</feature>
<protein>
    <recommendedName>
        <fullName evidence="1">GMP synthase [glutamine-hydrolyzing]</fullName>
        <ecNumber evidence="1">6.3.5.2</ecNumber>
    </recommendedName>
    <alternativeName>
        <fullName evidence="1">GMP synthetase</fullName>
    </alternativeName>
    <alternativeName>
        <fullName evidence="1">Glutamine amidotransferase</fullName>
    </alternativeName>
</protein>
<proteinExistence type="inferred from homology"/>
<organism>
    <name type="scientific">Vesicomyosocius okutanii subsp. Calyptogena okutanii (strain HA)</name>
    <dbReference type="NCBI Taxonomy" id="412965"/>
    <lineage>
        <taxon>Bacteria</taxon>
        <taxon>Pseudomonadati</taxon>
        <taxon>Pseudomonadota</taxon>
        <taxon>Gammaproteobacteria</taxon>
        <taxon>Candidatus Pseudothioglobaceae</taxon>
        <taxon>Candidatus Vesicomyosocius</taxon>
    </lineage>
</organism>
<sequence>MMNNIHLNKILILDFGSQYTQLIARRVREIGVYCELSHYDINSDFIKKFNPKGVILSGGPDTVTFDNSARAPSIIFDLNIPILGICYGMQTMAIQLGGHATSADKHEYGFAKVRSCNYSPLLNGINDGGDDLLDVWMSHGIEVKRLPDGFKLIASTDSCNIAGFADINKHYYGLQFHPEVTHTKQGKHILERFVSDICQCKKNWTTDNIITKLVKDLKNQIGSANVLLGLSGGVDSSVVAILLQQAVGKQLTCVFVDNGLLRLNEGNKIMQTFAQNMSVKVIRVNAQEKFYNALSNEDKPEAKRKIIGHAFIEVFEEEARKLNNIQFLAQGTIYPDVIESAGTKSNKTKVIKSHHNVGGLPNSLQLTLVEPIKELFKDEVRKIGVILGLPTHMLNCHPFPGPGLSIRILGQVKQEYVDILRQADTIFIDELYKNNLYNTVNQAFAVFLPIKSVGVTGDARRYDYVISLRAVETIDFMTARWARLPYDFLDLVSNRIMNEIPRISRVVYDISSKPPATIEWE</sequence>
<gene>
    <name evidence="1" type="primary">guaA</name>
    <name type="ordered locus">COSY_0820</name>
</gene>
<reference key="1">
    <citation type="journal article" date="2007" name="Curr. Biol.">
        <title>Reduced genome of the thioautotrophic intracellular symbiont in a deep-sea clam, Calyptogena okutanii.</title>
        <authorList>
            <person name="Kuwahara H."/>
            <person name="Yoshida T."/>
            <person name="Takaki Y."/>
            <person name="Shimamura S."/>
            <person name="Nishi S."/>
            <person name="Harada M."/>
            <person name="Matsuyama K."/>
            <person name="Takishita K."/>
            <person name="Kawato M."/>
            <person name="Uematsu K."/>
            <person name="Fujiwara Y."/>
            <person name="Sato T."/>
            <person name="Kato C."/>
            <person name="Kitagawa M."/>
            <person name="Kato I."/>
            <person name="Maruyama T."/>
        </authorList>
    </citation>
    <scope>NUCLEOTIDE SEQUENCE [LARGE SCALE GENOMIC DNA]</scope>
    <source>
        <strain>HA</strain>
    </source>
</reference>
<comment type="function">
    <text evidence="1">Catalyzes the synthesis of GMP from XMP.</text>
</comment>
<comment type="catalytic activity">
    <reaction evidence="1">
        <text>XMP + L-glutamine + ATP + H2O = GMP + L-glutamate + AMP + diphosphate + 2 H(+)</text>
        <dbReference type="Rhea" id="RHEA:11680"/>
        <dbReference type="ChEBI" id="CHEBI:15377"/>
        <dbReference type="ChEBI" id="CHEBI:15378"/>
        <dbReference type="ChEBI" id="CHEBI:29985"/>
        <dbReference type="ChEBI" id="CHEBI:30616"/>
        <dbReference type="ChEBI" id="CHEBI:33019"/>
        <dbReference type="ChEBI" id="CHEBI:57464"/>
        <dbReference type="ChEBI" id="CHEBI:58115"/>
        <dbReference type="ChEBI" id="CHEBI:58359"/>
        <dbReference type="ChEBI" id="CHEBI:456215"/>
        <dbReference type="EC" id="6.3.5.2"/>
    </reaction>
</comment>
<comment type="pathway">
    <text evidence="1">Purine metabolism; GMP biosynthesis; GMP from XMP (L-Gln route): step 1/1.</text>
</comment>
<comment type="subunit">
    <text evidence="1">Homodimer.</text>
</comment>
<name>GUAA_VESOH</name>